<evidence type="ECO:0000255" key="1">
    <source>
        <dbReference type="HAMAP-Rule" id="MF_00049"/>
    </source>
</evidence>
<accession>A5UDF4</accession>
<gene>
    <name evidence="1" type="primary">leuS</name>
    <name type="ordered locus">CGSHiEE_07410</name>
</gene>
<protein>
    <recommendedName>
        <fullName evidence="1">Leucine--tRNA ligase</fullName>
        <ecNumber evidence="1">6.1.1.4</ecNumber>
    </recommendedName>
    <alternativeName>
        <fullName evidence="1">Leucyl-tRNA synthetase</fullName>
        <shortName evidence="1">LeuRS</shortName>
    </alternativeName>
</protein>
<feature type="chain" id="PRO_1000009348" description="Leucine--tRNA ligase">
    <location>
        <begin position="1"/>
        <end position="861"/>
    </location>
</feature>
<feature type="short sequence motif" description="'HIGH' region">
    <location>
        <begin position="42"/>
        <end position="52"/>
    </location>
</feature>
<feature type="short sequence motif" description="'KMSKS' region">
    <location>
        <begin position="619"/>
        <end position="623"/>
    </location>
</feature>
<feature type="binding site" evidence="1">
    <location>
        <position position="622"/>
    </location>
    <ligand>
        <name>ATP</name>
        <dbReference type="ChEBI" id="CHEBI:30616"/>
    </ligand>
</feature>
<proteinExistence type="inferred from homology"/>
<comment type="catalytic activity">
    <reaction evidence="1">
        <text>tRNA(Leu) + L-leucine + ATP = L-leucyl-tRNA(Leu) + AMP + diphosphate</text>
        <dbReference type="Rhea" id="RHEA:11688"/>
        <dbReference type="Rhea" id="RHEA-COMP:9613"/>
        <dbReference type="Rhea" id="RHEA-COMP:9622"/>
        <dbReference type="ChEBI" id="CHEBI:30616"/>
        <dbReference type="ChEBI" id="CHEBI:33019"/>
        <dbReference type="ChEBI" id="CHEBI:57427"/>
        <dbReference type="ChEBI" id="CHEBI:78442"/>
        <dbReference type="ChEBI" id="CHEBI:78494"/>
        <dbReference type="ChEBI" id="CHEBI:456215"/>
        <dbReference type="EC" id="6.1.1.4"/>
    </reaction>
</comment>
<comment type="subcellular location">
    <subcellularLocation>
        <location evidence="1">Cytoplasm</location>
    </subcellularLocation>
</comment>
<comment type="similarity">
    <text evidence="1">Belongs to the class-I aminoacyl-tRNA synthetase family.</text>
</comment>
<sequence>MQEQYRPDMIEPKVQQYWAENKVFKAIKDESKEKYYCLSMFPYPSGRLHMGHVRNYTIGDVISRYQRMLGKNVLQPFGWDAFGLPAEGAAIKNKTAPAKWTYENIAYMKKQLQLLGFGFDWDREIATCKPDYYKWEQWFFTELYKKGLVYKKTSTVNWCPNDETVLANEQVHEGCCWRCDTPVEQKEIPQWFIKITDYAEQLLGGLDTLPQWPDMVKTMQRNWIGRSEGVEITFDVANTNEKVAVYTTRPDTFYGVSYLGIAAAHPLASLAAQNNSELAAFIQEAKNAKVAEADLATMEKKGMATGLFAIHPLTGEKLPIWVANFVLMHYGTGAVMAVPAHDQRDFEFAQKYGLQIKQVIEPIADEEIDLTKQAFTEHGKLVNSAEFDGKDFDGAFNGIADKLEKLGVGKRQVNYRLRDWGVSRQRYWGAPIPMLTLENGDVVPAPMEDLPIILPEDVVMDGVKSPIKADLNWAKTTLNGAPALKETDTFDTFMESSWYYARYTCPQYQNGMLDAEEANYWLPVDQYIGGIEHATMHLLYFRFFHKLLRDAGFVTSDEPADKLLCQGMVLADAFYYTSPTNERIWVSPTQVTLERDEKGRIIKATDPEGRELVHSGMTKMSKSKNNGIDPQEMVEKYGADTVRLFMMFASPAEMTLEWQESGVEGAKRFLGRVWNLVYQYQQNPAKTSLDLTALSAEQKVLRREVHKTIAKVSDDIGRRQTFNTAIAAVMELMNKLTKASLDSEQDRAVMAEALSAVVRMLYPITPHICFELWQALGNESAIDTAEWVKADEAAMVEDEKLIVVQVNGKVRGKVTVAADADEDTVKTIAFADENVKKFIDNQHIVKVIYVVGKLLNVVVKP</sequence>
<reference key="1">
    <citation type="journal article" date="2007" name="Genome Biol.">
        <title>Characterization and modeling of the Haemophilus influenzae core and supragenomes based on the complete genomic sequences of Rd and 12 clinical nontypeable strains.</title>
        <authorList>
            <person name="Hogg J.S."/>
            <person name="Hu F.Z."/>
            <person name="Janto B."/>
            <person name="Boissy R."/>
            <person name="Hayes J."/>
            <person name="Keefe R."/>
            <person name="Post J.C."/>
            <person name="Ehrlich G.D."/>
        </authorList>
    </citation>
    <scope>NUCLEOTIDE SEQUENCE [LARGE SCALE GENOMIC DNA]</scope>
    <source>
        <strain>PittEE</strain>
    </source>
</reference>
<organism>
    <name type="scientific">Haemophilus influenzae (strain PittEE)</name>
    <dbReference type="NCBI Taxonomy" id="374930"/>
    <lineage>
        <taxon>Bacteria</taxon>
        <taxon>Pseudomonadati</taxon>
        <taxon>Pseudomonadota</taxon>
        <taxon>Gammaproteobacteria</taxon>
        <taxon>Pasteurellales</taxon>
        <taxon>Pasteurellaceae</taxon>
        <taxon>Haemophilus</taxon>
    </lineage>
</organism>
<keyword id="KW-0030">Aminoacyl-tRNA synthetase</keyword>
<keyword id="KW-0067">ATP-binding</keyword>
<keyword id="KW-0963">Cytoplasm</keyword>
<keyword id="KW-0436">Ligase</keyword>
<keyword id="KW-0547">Nucleotide-binding</keyword>
<keyword id="KW-0648">Protein biosynthesis</keyword>
<name>SYL_HAEIE</name>
<dbReference type="EC" id="6.1.1.4" evidence="1"/>
<dbReference type="EMBL" id="CP000671">
    <property type="protein sequence ID" value="ABQ98805.1"/>
    <property type="molecule type" value="Genomic_DNA"/>
</dbReference>
<dbReference type="SMR" id="A5UDF4"/>
<dbReference type="KEGG" id="hip:CGSHiEE_07410"/>
<dbReference type="HOGENOM" id="CLU_004427_0_0_6"/>
<dbReference type="GO" id="GO:0005829">
    <property type="term" value="C:cytosol"/>
    <property type="evidence" value="ECO:0007669"/>
    <property type="project" value="TreeGrafter"/>
</dbReference>
<dbReference type="GO" id="GO:0002161">
    <property type="term" value="F:aminoacyl-tRNA deacylase activity"/>
    <property type="evidence" value="ECO:0007669"/>
    <property type="project" value="InterPro"/>
</dbReference>
<dbReference type="GO" id="GO:0005524">
    <property type="term" value="F:ATP binding"/>
    <property type="evidence" value="ECO:0007669"/>
    <property type="project" value="UniProtKB-UniRule"/>
</dbReference>
<dbReference type="GO" id="GO:0004823">
    <property type="term" value="F:leucine-tRNA ligase activity"/>
    <property type="evidence" value="ECO:0007669"/>
    <property type="project" value="UniProtKB-UniRule"/>
</dbReference>
<dbReference type="GO" id="GO:0006429">
    <property type="term" value="P:leucyl-tRNA aminoacylation"/>
    <property type="evidence" value="ECO:0007669"/>
    <property type="project" value="UniProtKB-UniRule"/>
</dbReference>
<dbReference type="CDD" id="cd07958">
    <property type="entry name" value="Anticodon_Ia_Leu_BEm"/>
    <property type="match status" value="1"/>
</dbReference>
<dbReference type="CDD" id="cd00812">
    <property type="entry name" value="LeuRS_core"/>
    <property type="match status" value="1"/>
</dbReference>
<dbReference type="FunFam" id="1.10.730.10:FF:000003">
    <property type="entry name" value="Leucine--tRNA ligase"/>
    <property type="match status" value="1"/>
</dbReference>
<dbReference type="FunFam" id="2.20.28.290:FF:000001">
    <property type="entry name" value="Leucine--tRNA ligase"/>
    <property type="match status" value="1"/>
</dbReference>
<dbReference type="FunFam" id="3.10.20.590:FF:000001">
    <property type="entry name" value="Leucine--tRNA ligase"/>
    <property type="match status" value="1"/>
</dbReference>
<dbReference type="FunFam" id="3.40.50.620:FF:000003">
    <property type="entry name" value="Leucine--tRNA ligase"/>
    <property type="match status" value="1"/>
</dbReference>
<dbReference type="FunFam" id="3.40.50.620:FF:000051">
    <property type="entry name" value="Leucine--tRNA ligase"/>
    <property type="match status" value="1"/>
</dbReference>
<dbReference type="FunFam" id="3.90.740.10:FF:000012">
    <property type="entry name" value="Leucine--tRNA ligase"/>
    <property type="match status" value="1"/>
</dbReference>
<dbReference type="Gene3D" id="2.20.28.290">
    <property type="match status" value="1"/>
</dbReference>
<dbReference type="Gene3D" id="3.10.20.590">
    <property type="match status" value="1"/>
</dbReference>
<dbReference type="Gene3D" id="3.40.50.620">
    <property type="entry name" value="HUPs"/>
    <property type="match status" value="2"/>
</dbReference>
<dbReference type="Gene3D" id="1.10.730.10">
    <property type="entry name" value="Isoleucyl-tRNA Synthetase, Domain 1"/>
    <property type="match status" value="1"/>
</dbReference>
<dbReference type="Gene3D" id="3.90.740.10">
    <property type="entry name" value="Valyl/Leucyl/Isoleucyl-tRNA synthetase, editing domain"/>
    <property type="match status" value="1"/>
</dbReference>
<dbReference type="HAMAP" id="MF_00049_B">
    <property type="entry name" value="Leu_tRNA_synth_B"/>
    <property type="match status" value="1"/>
</dbReference>
<dbReference type="InterPro" id="IPR001412">
    <property type="entry name" value="aa-tRNA-synth_I_CS"/>
</dbReference>
<dbReference type="InterPro" id="IPR002300">
    <property type="entry name" value="aa-tRNA-synth_Ia"/>
</dbReference>
<dbReference type="InterPro" id="IPR002302">
    <property type="entry name" value="Leu-tRNA-ligase"/>
</dbReference>
<dbReference type="InterPro" id="IPR025709">
    <property type="entry name" value="Leu_tRNA-synth_edit"/>
</dbReference>
<dbReference type="InterPro" id="IPR013155">
    <property type="entry name" value="M/V/L/I-tRNA-synth_anticd-bd"/>
</dbReference>
<dbReference type="InterPro" id="IPR015413">
    <property type="entry name" value="Methionyl/Leucyl_tRNA_Synth"/>
</dbReference>
<dbReference type="InterPro" id="IPR014729">
    <property type="entry name" value="Rossmann-like_a/b/a_fold"/>
</dbReference>
<dbReference type="InterPro" id="IPR009080">
    <property type="entry name" value="tRNAsynth_Ia_anticodon-bd"/>
</dbReference>
<dbReference type="InterPro" id="IPR009008">
    <property type="entry name" value="Val/Leu/Ile-tRNA-synth_edit"/>
</dbReference>
<dbReference type="NCBIfam" id="TIGR00396">
    <property type="entry name" value="leuS_bact"/>
    <property type="match status" value="1"/>
</dbReference>
<dbReference type="PANTHER" id="PTHR43740:SF2">
    <property type="entry name" value="LEUCINE--TRNA LIGASE, MITOCHONDRIAL"/>
    <property type="match status" value="1"/>
</dbReference>
<dbReference type="PANTHER" id="PTHR43740">
    <property type="entry name" value="LEUCYL-TRNA SYNTHETASE"/>
    <property type="match status" value="1"/>
</dbReference>
<dbReference type="Pfam" id="PF08264">
    <property type="entry name" value="Anticodon_1"/>
    <property type="match status" value="1"/>
</dbReference>
<dbReference type="Pfam" id="PF00133">
    <property type="entry name" value="tRNA-synt_1"/>
    <property type="match status" value="2"/>
</dbReference>
<dbReference type="Pfam" id="PF13603">
    <property type="entry name" value="tRNA-synt_1_2"/>
    <property type="match status" value="1"/>
</dbReference>
<dbReference type="Pfam" id="PF09334">
    <property type="entry name" value="tRNA-synt_1g"/>
    <property type="match status" value="1"/>
</dbReference>
<dbReference type="PRINTS" id="PR00985">
    <property type="entry name" value="TRNASYNTHLEU"/>
</dbReference>
<dbReference type="SUPFAM" id="SSF47323">
    <property type="entry name" value="Anticodon-binding domain of a subclass of class I aminoacyl-tRNA synthetases"/>
    <property type="match status" value="1"/>
</dbReference>
<dbReference type="SUPFAM" id="SSF52374">
    <property type="entry name" value="Nucleotidylyl transferase"/>
    <property type="match status" value="1"/>
</dbReference>
<dbReference type="SUPFAM" id="SSF50677">
    <property type="entry name" value="ValRS/IleRS/LeuRS editing domain"/>
    <property type="match status" value="1"/>
</dbReference>
<dbReference type="PROSITE" id="PS00178">
    <property type="entry name" value="AA_TRNA_LIGASE_I"/>
    <property type="match status" value="1"/>
</dbReference>